<proteinExistence type="inferred from homology"/>
<evidence type="ECO:0000255" key="1">
    <source>
        <dbReference type="HAMAP-Rule" id="MF_00366"/>
    </source>
</evidence>
<name>RPOZ_IDILO</name>
<protein>
    <recommendedName>
        <fullName evidence="1">DNA-directed RNA polymerase subunit omega</fullName>
        <shortName evidence="1">RNAP omega subunit</shortName>
        <ecNumber evidence="1">2.7.7.6</ecNumber>
    </recommendedName>
    <alternativeName>
        <fullName evidence="1">RNA polymerase omega subunit</fullName>
    </alternativeName>
    <alternativeName>
        <fullName evidence="1">Transcriptase subunit omega</fullName>
    </alternativeName>
</protein>
<reference key="1">
    <citation type="journal article" date="2004" name="Proc. Natl. Acad. Sci. U.S.A.">
        <title>Genome sequence of the deep-sea gamma-proteobacterium Idiomarina loihiensis reveals amino acid fermentation as a source of carbon and energy.</title>
        <authorList>
            <person name="Hou S."/>
            <person name="Saw J.H."/>
            <person name="Lee K.S."/>
            <person name="Freitas T.A."/>
            <person name="Belisle C."/>
            <person name="Kawarabayasi Y."/>
            <person name="Donachie S.P."/>
            <person name="Pikina A."/>
            <person name="Galperin M.Y."/>
            <person name="Koonin E.V."/>
            <person name="Makarova K.S."/>
            <person name="Omelchenko M.V."/>
            <person name="Sorokin A."/>
            <person name="Wolf Y.I."/>
            <person name="Li Q.X."/>
            <person name="Keum Y.S."/>
            <person name="Campbell S."/>
            <person name="Denery J."/>
            <person name="Aizawa S."/>
            <person name="Shibata S."/>
            <person name="Malahoff A."/>
            <person name="Alam M."/>
        </authorList>
    </citation>
    <scope>NUCLEOTIDE SEQUENCE [LARGE SCALE GENOMIC DNA]</scope>
    <source>
        <strain>ATCC BAA-735 / DSM 15497 / L2-TR</strain>
    </source>
</reference>
<sequence length="89" mass="10036">MARVTVEDAVDRVGNRFDLILLASRRARQLANGKEPLVETKNEKPTVIALREIEQGLIDNERLDIEDQAAQKQQDAEELRAVDALRGIE</sequence>
<comment type="function">
    <text evidence="1">Promotes RNA polymerase assembly. Latches the N- and C-terminal regions of the beta' subunit thereby facilitating its interaction with the beta and alpha subunits.</text>
</comment>
<comment type="catalytic activity">
    <reaction evidence="1">
        <text>RNA(n) + a ribonucleoside 5'-triphosphate = RNA(n+1) + diphosphate</text>
        <dbReference type="Rhea" id="RHEA:21248"/>
        <dbReference type="Rhea" id="RHEA-COMP:14527"/>
        <dbReference type="Rhea" id="RHEA-COMP:17342"/>
        <dbReference type="ChEBI" id="CHEBI:33019"/>
        <dbReference type="ChEBI" id="CHEBI:61557"/>
        <dbReference type="ChEBI" id="CHEBI:140395"/>
        <dbReference type="EC" id="2.7.7.6"/>
    </reaction>
</comment>
<comment type="subunit">
    <text evidence="1">The RNAP catalytic core consists of 2 alpha, 1 beta, 1 beta' and 1 omega subunit. When a sigma factor is associated with the core the holoenzyme is formed, which can initiate transcription.</text>
</comment>
<comment type="similarity">
    <text evidence="1">Belongs to the RNA polymerase subunit omega family.</text>
</comment>
<dbReference type="EC" id="2.7.7.6" evidence="1"/>
<dbReference type="EMBL" id="AE017340">
    <property type="protein sequence ID" value="AAV83213.1"/>
    <property type="molecule type" value="Genomic_DNA"/>
</dbReference>
<dbReference type="RefSeq" id="WP_011235607.1">
    <property type="nucleotide sequence ID" value="NC_006512.1"/>
</dbReference>
<dbReference type="SMR" id="Q5QYI0"/>
<dbReference type="STRING" id="283942.IL2381"/>
<dbReference type="GeneID" id="78253082"/>
<dbReference type="KEGG" id="ilo:IL2381"/>
<dbReference type="eggNOG" id="COG1758">
    <property type="taxonomic scope" value="Bacteria"/>
</dbReference>
<dbReference type="HOGENOM" id="CLU_125406_5_3_6"/>
<dbReference type="OrthoDB" id="9796300at2"/>
<dbReference type="Proteomes" id="UP000001171">
    <property type="component" value="Chromosome"/>
</dbReference>
<dbReference type="GO" id="GO:0000428">
    <property type="term" value="C:DNA-directed RNA polymerase complex"/>
    <property type="evidence" value="ECO:0007669"/>
    <property type="project" value="UniProtKB-KW"/>
</dbReference>
<dbReference type="GO" id="GO:0003677">
    <property type="term" value="F:DNA binding"/>
    <property type="evidence" value="ECO:0007669"/>
    <property type="project" value="UniProtKB-UniRule"/>
</dbReference>
<dbReference type="GO" id="GO:0003899">
    <property type="term" value="F:DNA-directed RNA polymerase activity"/>
    <property type="evidence" value="ECO:0007669"/>
    <property type="project" value="UniProtKB-UniRule"/>
</dbReference>
<dbReference type="GO" id="GO:0006351">
    <property type="term" value="P:DNA-templated transcription"/>
    <property type="evidence" value="ECO:0007669"/>
    <property type="project" value="UniProtKB-UniRule"/>
</dbReference>
<dbReference type="Gene3D" id="3.90.940.10">
    <property type="match status" value="1"/>
</dbReference>
<dbReference type="HAMAP" id="MF_00366">
    <property type="entry name" value="RNApol_bact_RpoZ"/>
    <property type="match status" value="1"/>
</dbReference>
<dbReference type="InterPro" id="IPR003716">
    <property type="entry name" value="DNA-dir_RNA_pol_omega"/>
</dbReference>
<dbReference type="InterPro" id="IPR006110">
    <property type="entry name" value="Pol_omega/Rpo6/RPB6"/>
</dbReference>
<dbReference type="InterPro" id="IPR036161">
    <property type="entry name" value="RPB6/omega-like_sf"/>
</dbReference>
<dbReference type="NCBIfam" id="TIGR00690">
    <property type="entry name" value="rpoZ"/>
    <property type="match status" value="1"/>
</dbReference>
<dbReference type="PANTHER" id="PTHR34476">
    <property type="entry name" value="DNA-DIRECTED RNA POLYMERASE SUBUNIT OMEGA"/>
    <property type="match status" value="1"/>
</dbReference>
<dbReference type="PANTHER" id="PTHR34476:SF1">
    <property type="entry name" value="DNA-DIRECTED RNA POLYMERASE SUBUNIT OMEGA"/>
    <property type="match status" value="1"/>
</dbReference>
<dbReference type="Pfam" id="PF01192">
    <property type="entry name" value="RNA_pol_Rpb6"/>
    <property type="match status" value="1"/>
</dbReference>
<dbReference type="SMART" id="SM01409">
    <property type="entry name" value="RNA_pol_Rpb6"/>
    <property type="match status" value="1"/>
</dbReference>
<dbReference type="SUPFAM" id="SSF63562">
    <property type="entry name" value="RPB6/omega subunit-like"/>
    <property type="match status" value="1"/>
</dbReference>
<accession>Q5QYI0</accession>
<gene>
    <name evidence="1" type="primary">rpoZ</name>
    <name type="ordered locus">IL2381</name>
</gene>
<feature type="chain" id="PRO_0000237466" description="DNA-directed RNA polymerase subunit omega">
    <location>
        <begin position="1"/>
        <end position="89"/>
    </location>
</feature>
<organism>
    <name type="scientific">Idiomarina loihiensis (strain ATCC BAA-735 / DSM 15497 / L2-TR)</name>
    <dbReference type="NCBI Taxonomy" id="283942"/>
    <lineage>
        <taxon>Bacteria</taxon>
        <taxon>Pseudomonadati</taxon>
        <taxon>Pseudomonadota</taxon>
        <taxon>Gammaproteobacteria</taxon>
        <taxon>Alteromonadales</taxon>
        <taxon>Idiomarinaceae</taxon>
        <taxon>Idiomarina</taxon>
    </lineage>
</organism>
<keyword id="KW-0240">DNA-directed RNA polymerase</keyword>
<keyword id="KW-0548">Nucleotidyltransferase</keyword>
<keyword id="KW-1185">Reference proteome</keyword>
<keyword id="KW-0804">Transcription</keyword>
<keyword id="KW-0808">Transferase</keyword>